<accession>A6TJ58</accession>
<reference key="1">
    <citation type="submission" date="2006-09" db="EMBL/GenBank/DDBJ databases">
        <authorList>
            <consortium name="The Klebsiella pneumonia Genome Sequencing Project"/>
            <person name="McClelland M."/>
            <person name="Sanderson E.K."/>
            <person name="Spieth J."/>
            <person name="Clifton W.S."/>
            <person name="Latreille P."/>
            <person name="Sabo A."/>
            <person name="Pepin K."/>
            <person name="Bhonagiri V."/>
            <person name="Porwollik S."/>
            <person name="Ali J."/>
            <person name="Wilson R.K."/>
        </authorList>
    </citation>
    <scope>NUCLEOTIDE SEQUENCE [LARGE SCALE GENOMIC DNA]</scope>
    <source>
        <strain>ATCC 700721 / MGH 78578</strain>
    </source>
</reference>
<organism>
    <name type="scientific">Klebsiella pneumoniae subsp. pneumoniae (strain ATCC 700721 / MGH 78578)</name>
    <dbReference type="NCBI Taxonomy" id="272620"/>
    <lineage>
        <taxon>Bacteria</taxon>
        <taxon>Pseudomonadati</taxon>
        <taxon>Pseudomonadota</taxon>
        <taxon>Gammaproteobacteria</taxon>
        <taxon>Enterobacterales</taxon>
        <taxon>Enterobacteriaceae</taxon>
        <taxon>Klebsiella/Raoultella group</taxon>
        <taxon>Klebsiella</taxon>
        <taxon>Klebsiella pneumoniae complex</taxon>
    </lineage>
</organism>
<dbReference type="EMBL" id="CP000650">
    <property type="protein sequence ID" value="ABR80631.1"/>
    <property type="molecule type" value="Genomic_DNA"/>
</dbReference>
<dbReference type="SMR" id="A6TJ58"/>
<dbReference type="EnsemblBacteria" id="ABR80631">
    <property type="protein sequence ID" value="ABR80631"/>
    <property type="gene ID" value="KPN_pKPN5p08251"/>
</dbReference>
<dbReference type="KEGG" id="kpn:KPN_pKPN5p08251"/>
<dbReference type="HOGENOM" id="CLU_015803_1_0_6"/>
<dbReference type="Proteomes" id="UP000000265">
    <property type="component" value="Plasmid pKPN5"/>
</dbReference>
<dbReference type="GO" id="GO:0005886">
    <property type="term" value="C:plasma membrane"/>
    <property type="evidence" value="ECO:0007669"/>
    <property type="project" value="UniProtKB-SubCell"/>
</dbReference>
<dbReference type="GO" id="GO:0015385">
    <property type="term" value="F:sodium:proton antiporter activity"/>
    <property type="evidence" value="ECO:0007669"/>
    <property type="project" value="TreeGrafter"/>
</dbReference>
<dbReference type="GO" id="GO:0006885">
    <property type="term" value="P:regulation of pH"/>
    <property type="evidence" value="ECO:0007669"/>
    <property type="project" value="InterPro"/>
</dbReference>
<dbReference type="Gene3D" id="1.20.1530.10">
    <property type="entry name" value="Na+/H+ antiporter like domain"/>
    <property type="match status" value="1"/>
</dbReference>
<dbReference type="HAMAP" id="MF_01844">
    <property type="entry name" value="NhaA"/>
    <property type="match status" value="1"/>
</dbReference>
<dbReference type="InterPro" id="IPR023171">
    <property type="entry name" value="Na/H_antiporter_dom_sf"/>
</dbReference>
<dbReference type="InterPro" id="IPR004670">
    <property type="entry name" value="NhaA"/>
</dbReference>
<dbReference type="NCBIfam" id="TIGR00773">
    <property type="entry name" value="NhaA"/>
    <property type="match status" value="1"/>
</dbReference>
<dbReference type="NCBIfam" id="NF007111">
    <property type="entry name" value="PRK09560.1"/>
    <property type="match status" value="1"/>
</dbReference>
<dbReference type="NCBIfam" id="NF007112">
    <property type="entry name" value="PRK09561.1"/>
    <property type="match status" value="1"/>
</dbReference>
<dbReference type="PANTHER" id="PTHR30341:SF0">
    <property type="entry name" value="NA(+)_H(+) ANTIPORTER NHAA"/>
    <property type="match status" value="1"/>
</dbReference>
<dbReference type="PANTHER" id="PTHR30341">
    <property type="entry name" value="SODIUM ION/PROTON ANTIPORTER NHAA-RELATED"/>
    <property type="match status" value="1"/>
</dbReference>
<dbReference type="Pfam" id="PF06965">
    <property type="entry name" value="Na_H_antiport_1"/>
    <property type="match status" value="1"/>
</dbReference>
<proteinExistence type="inferred from homology"/>
<evidence type="ECO:0000255" key="1">
    <source>
        <dbReference type="HAMAP-Rule" id="MF_01844"/>
    </source>
</evidence>
<protein>
    <recommendedName>
        <fullName evidence="1">Na(+)/H(+) antiporter NhaA 2</fullName>
    </recommendedName>
    <alternativeName>
        <fullName evidence="1">Sodium/proton antiporter NhaA 2</fullName>
    </alternativeName>
</protein>
<geneLocation type="plasmid">
    <name>pKPN5</name>
</geneLocation>
<name>NHAA2_KLEP7</name>
<gene>
    <name evidence="1" type="primary">nhaA2</name>
    <name type="ordered locus">KPN78578_51680</name>
    <name type="ORF">KPN_pKPN5p08251</name>
</gene>
<sequence>MSEVPSAFFSSPAAGGIVLIIASAAAIIVANSPLREGYEVFLKYNAAGLSVEHWINDALMAVFFMMVGLEIKRELLTGQLATWGQRALPGFAALGGMAVPAAIYVWFNAGSDETLAGWAIPAATDIAFALGVLALLGSRVPASLKIFLSALAILDDMGAVAIIALFYTSNISFLMLAGAAVTVALLFIMNRAGITRLFPYLLAGGVLWFFMLQSGVHATIAGILLALFIPLRVTDPDKQSPLARLEHGINPWVTFLILPLFGFANAGVALSGMTADDLMSPVPVGVALGLFVGKQAGIFGLSLLAVSLGLAKRPEKSTWLQVYGVSVLCGIGFTMSLFIGNLAFAESPLLVDEVKVGVLAGSVLAALAGMLILRFSPSHPSR</sequence>
<feature type="chain" id="PRO_0000334328" description="Na(+)/H(+) antiporter NhaA 2">
    <location>
        <begin position="1"/>
        <end position="382"/>
    </location>
</feature>
<feature type="transmembrane region" description="Helical" evidence="1">
    <location>
        <begin position="8"/>
        <end position="28"/>
    </location>
</feature>
<feature type="transmembrane region" description="Helical" evidence="1">
    <location>
        <begin position="49"/>
        <end position="69"/>
    </location>
</feature>
<feature type="transmembrane region" description="Helical" evidence="1">
    <location>
        <begin position="87"/>
        <end position="107"/>
    </location>
</feature>
<feature type="transmembrane region" description="Helical" evidence="1">
    <location>
        <begin position="115"/>
        <end position="135"/>
    </location>
</feature>
<feature type="transmembrane region" description="Helical" evidence="1">
    <location>
        <begin position="146"/>
        <end position="166"/>
    </location>
</feature>
<feature type="transmembrane region" description="Helical" evidence="1">
    <location>
        <begin position="169"/>
        <end position="189"/>
    </location>
</feature>
<feature type="transmembrane region" description="Helical" evidence="1">
    <location>
        <begin position="209"/>
        <end position="229"/>
    </location>
</feature>
<feature type="transmembrane region" description="Helical" evidence="1">
    <location>
        <begin position="252"/>
        <end position="272"/>
    </location>
</feature>
<feature type="transmembrane region" description="Helical" evidence="1">
    <location>
        <begin position="286"/>
        <end position="306"/>
    </location>
</feature>
<feature type="transmembrane region" description="Helical" evidence="1">
    <location>
        <begin position="325"/>
        <end position="345"/>
    </location>
</feature>
<feature type="transmembrane region" description="Helical" evidence="1">
    <location>
        <begin position="353"/>
        <end position="373"/>
    </location>
</feature>
<keyword id="KW-0050">Antiport</keyword>
<keyword id="KW-0997">Cell inner membrane</keyword>
<keyword id="KW-1003">Cell membrane</keyword>
<keyword id="KW-0406">Ion transport</keyword>
<keyword id="KW-0472">Membrane</keyword>
<keyword id="KW-0614">Plasmid</keyword>
<keyword id="KW-0915">Sodium</keyword>
<keyword id="KW-0739">Sodium transport</keyword>
<keyword id="KW-0812">Transmembrane</keyword>
<keyword id="KW-1133">Transmembrane helix</keyword>
<keyword id="KW-0813">Transport</keyword>
<comment type="function">
    <text evidence="1">Na(+)/H(+) antiporter that extrudes sodium in exchange for external protons.</text>
</comment>
<comment type="catalytic activity">
    <reaction evidence="1">
        <text>Na(+)(in) + 2 H(+)(out) = Na(+)(out) + 2 H(+)(in)</text>
        <dbReference type="Rhea" id="RHEA:29251"/>
        <dbReference type="ChEBI" id="CHEBI:15378"/>
        <dbReference type="ChEBI" id="CHEBI:29101"/>
    </reaction>
    <physiologicalReaction direction="left-to-right" evidence="1">
        <dbReference type="Rhea" id="RHEA:29252"/>
    </physiologicalReaction>
</comment>
<comment type="subcellular location">
    <subcellularLocation>
        <location evidence="1">Cell inner membrane</location>
        <topology evidence="1">Multi-pass membrane protein</topology>
    </subcellularLocation>
</comment>
<comment type="similarity">
    <text evidence="1">Belongs to the NhaA Na(+)/H(+) (TC 2.A.33) antiporter family.</text>
</comment>